<feature type="chain" id="PRO_0000092148" description="Putative ABC transporter ATP-binding protein MM_1996">
    <location>
        <begin position="1"/>
        <end position="581"/>
    </location>
</feature>
<feature type="domain" description="ABC transporter 1" evidence="2">
    <location>
        <begin position="10"/>
        <end position="250"/>
    </location>
</feature>
<feature type="domain" description="ABC transporter 2" evidence="2">
    <location>
        <begin position="313"/>
        <end position="541"/>
    </location>
</feature>
<feature type="region of interest" description="Disordered" evidence="3">
    <location>
        <begin position="287"/>
        <end position="309"/>
    </location>
</feature>
<feature type="compositionally biased region" description="Polar residues" evidence="3">
    <location>
        <begin position="300"/>
        <end position="309"/>
    </location>
</feature>
<feature type="binding site" evidence="2">
    <location>
        <begin position="44"/>
        <end position="51"/>
    </location>
    <ligand>
        <name>ATP</name>
        <dbReference type="ChEBI" id="CHEBI:30616"/>
        <label>1</label>
    </ligand>
</feature>
<feature type="binding site" evidence="2">
    <location>
        <begin position="346"/>
        <end position="353"/>
    </location>
    <ligand>
        <name>ATP</name>
        <dbReference type="ChEBI" id="CHEBI:30616"/>
        <label>2</label>
    </ligand>
</feature>
<reference key="1">
    <citation type="journal article" date="2002" name="J. Mol. Microbiol. Biotechnol.">
        <title>The genome of Methanosarcina mazei: evidence for lateral gene transfer between Bacteria and Archaea.</title>
        <authorList>
            <person name="Deppenmeier U."/>
            <person name="Johann A."/>
            <person name="Hartsch T."/>
            <person name="Merkl R."/>
            <person name="Schmitz R.A."/>
            <person name="Martinez-Arias R."/>
            <person name="Henne A."/>
            <person name="Wiezer A."/>
            <person name="Baeumer S."/>
            <person name="Jacobi C."/>
            <person name="Brueggemann H."/>
            <person name="Lienard T."/>
            <person name="Christmann A."/>
            <person name="Boemecke M."/>
            <person name="Steckel S."/>
            <person name="Bhattacharyya A."/>
            <person name="Lykidis A."/>
            <person name="Overbeek R."/>
            <person name="Klenk H.-P."/>
            <person name="Gunsalus R.P."/>
            <person name="Fritz H.-J."/>
            <person name="Gottschalk G."/>
        </authorList>
    </citation>
    <scope>NUCLEOTIDE SEQUENCE [LARGE SCALE GENOMIC DNA]</scope>
    <source>
        <strain>ATCC BAA-159 / DSM 3647 / Goe1 / Go1 / JCM 11833 / OCM 88</strain>
    </source>
</reference>
<gene>
    <name type="ordered locus">MM_1996</name>
</gene>
<organism>
    <name type="scientific">Methanosarcina mazei (strain ATCC BAA-159 / DSM 3647 / Goe1 / Go1 / JCM 11833 / OCM 88)</name>
    <name type="common">Methanosarcina frisia</name>
    <dbReference type="NCBI Taxonomy" id="192952"/>
    <lineage>
        <taxon>Archaea</taxon>
        <taxon>Methanobacteriati</taxon>
        <taxon>Methanobacteriota</taxon>
        <taxon>Stenosarchaea group</taxon>
        <taxon>Methanomicrobia</taxon>
        <taxon>Methanosarcinales</taxon>
        <taxon>Methanosarcinaceae</taxon>
        <taxon>Methanosarcina</taxon>
    </lineage>
</organism>
<comment type="function">
    <text evidence="1">Probably part of an ABC transporter complex. Responsible for energy coupling to the transport system (By similarity).</text>
</comment>
<comment type="subcellular location">
    <subcellularLocation>
        <location evidence="1">Cell membrane</location>
        <topology evidence="1">Peripheral membrane protein</topology>
    </subcellularLocation>
</comment>
<comment type="similarity">
    <text evidence="4">Belongs to the ABC transporter superfamily.</text>
</comment>
<keyword id="KW-0067">ATP-binding</keyword>
<keyword id="KW-1003">Cell membrane</keyword>
<keyword id="KW-0472">Membrane</keyword>
<keyword id="KW-0547">Nucleotide-binding</keyword>
<keyword id="KW-0677">Repeat</keyword>
<keyword id="KW-1278">Translocase</keyword>
<keyword id="KW-0813">Transport</keyword>
<proteinExistence type="inferred from homology"/>
<sequence>MNQNRGSTIIEIRDLWYTYPGRAETTLKGIDLKIKEGEFVLLTGPTGCGKSTLLKTLNGIIPHESEGIFSGSIKISGIETVDSGQMELSKKAGLVFQSPDDQIFSTTVEDEVAFGPENLCMEREEIDKKVDDALKMVGMSGHRLDSTNSLSGGQKQRVCIASMLAMMPEILAMDEPVSQMDPAGTQEILNTVRELNRKQNITILLVEHRIHEIAPFADRVVIMDSGKIILDQPASKAFENLEVFHRLGLRVPEPVELCHTLGIKASPFSAEETFPLLNTGNFKEKIGDYPASPGRKEKTSSPGWSSENNEPLVSVRDLWSGYDKSRMVLKGINLEIHRGERVAVMGTNGSGKSTLLLNLAAMLRPYKGNVKIFGEDTKTKNPYSFAGRIGFVFQNPDLMLFCDSTEEEAKFGPARLKLDNIEERAKISLEAMSILNLRKDLPQSLSRGQRLRTAVASILSIDPILVLLDEPTTGQDRVNIEQMMDYFKTRGSTLVFCTHDIEIAMLYATRILVMNEGQIIADGRGRDVIKDIDILRKASLTQPPVVEIASYLGIDAFSITELVDGLIHRNPEIRIAEGIKC</sequence>
<name>Y1996_METMA</name>
<protein>
    <recommendedName>
        <fullName>Putative ABC transporter ATP-binding protein MM_1996</fullName>
        <ecNumber>7.-.-.-</ecNumber>
    </recommendedName>
</protein>
<dbReference type="EC" id="7.-.-.-"/>
<dbReference type="EMBL" id="AE008384">
    <property type="protein sequence ID" value="AAM31692.1"/>
    <property type="molecule type" value="Genomic_DNA"/>
</dbReference>
<dbReference type="RefSeq" id="WP_011033928.1">
    <property type="nucleotide sequence ID" value="NC_003901.1"/>
</dbReference>
<dbReference type="SMR" id="Q8PVG9"/>
<dbReference type="GeneID" id="1480338"/>
<dbReference type="KEGG" id="mma:MM_1996"/>
<dbReference type="PATRIC" id="fig|192952.21.peg.2297"/>
<dbReference type="eggNOG" id="arCOG00188">
    <property type="taxonomic scope" value="Archaea"/>
</dbReference>
<dbReference type="HOGENOM" id="CLU_000604_86_7_2"/>
<dbReference type="Proteomes" id="UP000000595">
    <property type="component" value="Chromosome"/>
</dbReference>
<dbReference type="GO" id="GO:0043190">
    <property type="term" value="C:ATP-binding cassette (ABC) transporter complex"/>
    <property type="evidence" value="ECO:0007669"/>
    <property type="project" value="TreeGrafter"/>
</dbReference>
<dbReference type="GO" id="GO:0005524">
    <property type="term" value="F:ATP binding"/>
    <property type="evidence" value="ECO:0007669"/>
    <property type="project" value="UniProtKB-KW"/>
</dbReference>
<dbReference type="GO" id="GO:0016887">
    <property type="term" value="F:ATP hydrolysis activity"/>
    <property type="evidence" value="ECO:0007669"/>
    <property type="project" value="InterPro"/>
</dbReference>
<dbReference type="GO" id="GO:0042626">
    <property type="term" value="F:ATPase-coupled transmembrane transporter activity"/>
    <property type="evidence" value="ECO:0007669"/>
    <property type="project" value="TreeGrafter"/>
</dbReference>
<dbReference type="CDD" id="cd03225">
    <property type="entry name" value="ABC_cobalt_CbiO_domain1"/>
    <property type="match status" value="2"/>
</dbReference>
<dbReference type="FunFam" id="3.40.50.300:FF:000224">
    <property type="entry name" value="Energy-coupling factor transporter ATP-binding protein EcfA"/>
    <property type="match status" value="1"/>
</dbReference>
<dbReference type="Gene3D" id="3.40.50.300">
    <property type="entry name" value="P-loop containing nucleotide triphosphate hydrolases"/>
    <property type="match status" value="2"/>
</dbReference>
<dbReference type="InterPro" id="IPR003593">
    <property type="entry name" value="AAA+_ATPase"/>
</dbReference>
<dbReference type="InterPro" id="IPR003439">
    <property type="entry name" value="ABC_transporter-like_ATP-bd"/>
</dbReference>
<dbReference type="InterPro" id="IPR017871">
    <property type="entry name" value="ABC_transporter-like_CS"/>
</dbReference>
<dbReference type="InterPro" id="IPR015856">
    <property type="entry name" value="ABC_transpr_CbiO/EcfA_su"/>
</dbReference>
<dbReference type="InterPro" id="IPR050095">
    <property type="entry name" value="ECF_ABC_transporter_ATP-bd"/>
</dbReference>
<dbReference type="InterPro" id="IPR027417">
    <property type="entry name" value="P-loop_NTPase"/>
</dbReference>
<dbReference type="NCBIfam" id="NF010167">
    <property type="entry name" value="PRK13648.1"/>
    <property type="match status" value="2"/>
</dbReference>
<dbReference type="PANTHER" id="PTHR43553:SF24">
    <property type="entry name" value="ENERGY-COUPLING FACTOR TRANSPORTER ATP-BINDING PROTEIN ECFA1"/>
    <property type="match status" value="1"/>
</dbReference>
<dbReference type="PANTHER" id="PTHR43553">
    <property type="entry name" value="HEAVY METAL TRANSPORTER"/>
    <property type="match status" value="1"/>
</dbReference>
<dbReference type="Pfam" id="PF00005">
    <property type="entry name" value="ABC_tran"/>
    <property type="match status" value="2"/>
</dbReference>
<dbReference type="SMART" id="SM00382">
    <property type="entry name" value="AAA"/>
    <property type="match status" value="2"/>
</dbReference>
<dbReference type="SUPFAM" id="SSF52540">
    <property type="entry name" value="P-loop containing nucleoside triphosphate hydrolases"/>
    <property type="match status" value="2"/>
</dbReference>
<dbReference type="PROSITE" id="PS00211">
    <property type="entry name" value="ABC_TRANSPORTER_1"/>
    <property type="match status" value="1"/>
</dbReference>
<dbReference type="PROSITE" id="PS50893">
    <property type="entry name" value="ABC_TRANSPORTER_2"/>
    <property type="match status" value="2"/>
</dbReference>
<evidence type="ECO:0000250" key="1"/>
<evidence type="ECO:0000255" key="2">
    <source>
        <dbReference type="PROSITE-ProRule" id="PRU00434"/>
    </source>
</evidence>
<evidence type="ECO:0000256" key="3">
    <source>
        <dbReference type="SAM" id="MobiDB-lite"/>
    </source>
</evidence>
<evidence type="ECO:0000305" key="4"/>
<accession>Q8PVG9</accession>